<evidence type="ECO:0000269" key="1">
    <source>
    </source>
</evidence>
<evidence type="ECO:0000303" key="2">
    <source>
    </source>
</evidence>
<evidence type="ECO:0000305" key="3"/>
<evidence type="ECO:0000305" key="4">
    <source>
    </source>
</evidence>
<accession>K3UFY2</accession>
<name>W4935_FUSPC</name>
<gene>
    <name type="ORF">FPSE_09186</name>
</gene>
<comment type="function">
    <text evidence="1">Thioesterase; part of the gene cluster that mediates the biosynthesis of the lipopeptides W493 A and B (PubMed:25412204). W493 A and B consist of six amino acid residues D-allo-thr, L-Ala, D-Ala, L-Gln, D-Tyr, and L-Val/L-Ile linked to a 3-hydroxy-4-methyltetradecanoic acid polyketide chain (PubMed:25412204). The biosynthesis starts with formation of the linear polyketide chain by the highly reducing polyketide synthase PKS40 (PubMed:25412204). The gene cluster contains a putative acyl-CoA ligase (FPSE_09184) for formation of a CoA thioester polyketide. The thiol bond could be hydrolyzed by the putative thioesterase (FPSE_09186) and then accepted by the first T domain in module 1 of NRPS32 (PubMed:25412204). The second T domain is responsible for accepting a threonine, which is adenylated by the A domain and epimerized to the D-allo-threonine formed by the E domain. The five successive modules incorporate Ala, Ala, Gln, Tyr, and Val/Ile into the final product, which is released by cyclization (PubMed:25412204).</text>
</comment>
<comment type="pathway">
    <text evidence="4">Secondary metabolite biosynthesis.</text>
</comment>
<comment type="similarity">
    <text evidence="3">Belongs to the AMT4 thioesterase family.</text>
</comment>
<proteinExistence type="inferred from homology"/>
<reference key="1">
    <citation type="journal article" date="2012" name="PLoS Pathog.">
        <title>Comparative pathogenomics reveals horizontally acquired novel virulence genes in fungi infecting cereal hosts.</title>
        <authorList>
            <person name="Gardiner D.M."/>
            <person name="McDonald M.C."/>
            <person name="Covarelli L."/>
            <person name="Solomon P.S."/>
            <person name="Rusu A.G."/>
            <person name="Marshall M."/>
            <person name="Kazan K."/>
            <person name="Chakraborty S."/>
            <person name="McDonald B.A."/>
            <person name="Manners J.M."/>
        </authorList>
    </citation>
    <scope>NUCLEOTIDE SEQUENCE [LARGE SCALE GENOMIC DNA]</scope>
    <source>
        <strain>CS3096</strain>
    </source>
</reference>
<reference key="2">
    <citation type="journal article" date="2014" name="J. Nat. Prod.">
        <title>Identification of the biosynthetic gene clusters for the lipopeptides fusaristatin A and W493 B in Fusarium graminearum and F. pseudograminearum.</title>
        <authorList>
            <person name="Soerensen J.L."/>
            <person name="Sondergaard T.E."/>
            <person name="Covarelli L."/>
            <person name="Fuertes P.R."/>
            <person name="Hansen F.T."/>
            <person name="Frandsen R.J."/>
            <person name="Saei W."/>
            <person name="Lukassen M.B."/>
            <person name="Wimmer R."/>
            <person name="Nielsen K.F."/>
            <person name="Gardiner D.M."/>
            <person name="Giese H."/>
        </authorList>
    </citation>
    <scope>IDENTIFICATION</scope>
    <scope>FUNCTION</scope>
    <scope>PATHWAY</scope>
</reference>
<keyword id="KW-0378">Hydrolase</keyword>
<keyword id="KW-1185">Reference proteome</keyword>
<dbReference type="EC" id="3.1.-.-" evidence="4"/>
<dbReference type="EMBL" id="AFNW01000306">
    <property type="protein sequence ID" value="EKJ70676.1"/>
    <property type="molecule type" value="Genomic_DNA"/>
</dbReference>
<dbReference type="RefSeq" id="XP_009260578.1">
    <property type="nucleotide sequence ID" value="XM_009262303.1"/>
</dbReference>
<dbReference type="SMR" id="K3UFY2"/>
<dbReference type="ESTHER" id="fuspc-w4935">
    <property type="family name" value="Thioesterase"/>
</dbReference>
<dbReference type="EnsemblFungi" id="EKJ70676">
    <property type="protein sequence ID" value="EKJ70676"/>
    <property type="gene ID" value="FPSE_09186"/>
</dbReference>
<dbReference type="GeneID" id="20367803"/>
<dbReference type="KEGG" id="fpu:FPSE_09186"/>
<dbReference type="HOGENOM" id="CLU_066049_0_0_1"/>
<dbReference type="OrthoDB" id="10253869at2759"/>
<dbReference type="Proteomes" id="UP000007978">
    <property type="component" value="Chromosome 1"/>
</dbReference>
<dbReference type="GO" id="GO:0016787">
    <property type="term" value="F:hydrolase activity"/>
    <property type="evidence" value="ECO:0007669"/>
    <property type="project" value="UniProtKB-KW"/>
</dbReference>
<dbReference type="GO" id="GO:0009058">
    <property type="term" value="P:biosynthetic process"/>
    <property type="evidence" value="ECO:0007669"/>
    <property type="project" value="InterPro"/>
</dbReference>
<dbReference type="Gene3D" id="3.40.50.1820">
    <property type="entry name" value="alpha/beta hydrolase"/>
    <property type="match status" value="1"/>
</dbReference>
<dbReference type="InterPro" id="IPR029058">
    <property type="entry name" value="AB_hydrolase_fold"/>
</dbReference>
<dbReference type="InterPro" id="IPR001031">
    <property type="entry name" value="Thioesterase"/>
</dbReference>
<dbReference type="Pfam" id="PF00975">
    <property type="entry name" value="Thioesterase"/>
    <property type="match status" value="1"/>
</dbReference>
<dbReference type="SUPFAM" id="SSF53474">
    <property type="entry name" value="alpha/beta-Hydrolases"/>
    <property type="match status" value="1"/>
</dbReference>
<organism>
    <name type="scientific">Fusarium pseudograminearum (strain CS3096)</name>
    <name type="common">Wheat and barley crown-rot fungus</name>
    <dbReference type="NCBI Taxonomy" id="1028729"/>
    <lineage>
        <taxon>Eukaryota</taxon>
        <taxon>Fungi</taxon>
        <taxon>Dikarya</taxon>
        <taxon>Ascomycota</taxon>
        <taxon>Pezizomycotina</taxon>
        <taxon>Sordariomycetes</taxon>
        <taxon>Hypocreomycetidae</taxon>
        <taxon>Hypocreales</taxon>
        <taxon>Nectriaceae</taxon>
        <taxon>Fusarium</taxon>
    </lineage>
</organism>
<protein>
    <recommendedName>
        <fullName evidence="2">Thioesterase FPSE_09186</fullName>
        <ecNumber evidence="4">3.1.-.-</ecNumber>
    </recommendedName>
    <alternativeName>
        <fullName evidence="2">W493 A and B biosynthesis cluster protein FPSE_09186</fullName>
    </alternativeName>
</protein>
<feature type="chain" id="PRO_0000445379" description="Thioesterase FPSE_09186">
    <location>
        <begin position="1"/>
        <end position="250"/>
    </location>
</feature>
<sequence length="250" mass="27629">MIRQIQKRPAGSNANPLFLFHDASGTISNYLALGLLGRDVYAIADSRIKAKGDESLQDMSRRYYALIKSTVAEGTILLGGWSLGGMTALQVAWIFSRDPKVNVAGVLMIDSPFPDYRHALSLALESPPSEDGPASTRSDIEKAMLQTVTMLHKWKIPVWRREPQPHTVMLCAGNDVDSDHVALSLVDQFRDSPTLGWNERAGPSVVNESYPIQGHHFSIFDPRNIDSVTKTIVTVTAAMEMMAPEDDEDY</sequence>